<proteinExistence type="evidence at protein level"/>
<comment type="function">
    <text evidence="1 5">Transcription factor required to direct islet cell differentiation during endocrine pancreas development. Specifically required for the differentiation of 4 of the 5 islet cell types and for the production of insulin. Not required for pancreatic PP (polypeptide-producing) cells differentiation. Acts downstream of NEUROG3 and regulates the transcription factors involved in beta-cell maturation and function, thereby restricting the expression of the beta-cell differentiation and specification genes, and thus the beta-cell fate choice. Activates transcription by forming a heterodimer with RFX3 and binding to the X-box in the promoter of target genes (PubMed:20148032). Involved in glucose-stimulated insulin secretion by promoting insulin and L-type calcium channel gene transcription (By similarity).</text>
</comment>
<comment type="subunit">
    <text evidence="5">Interacts with RFX3 (PubMed:20148032).</text>
</comment>
<comment type="subcellular location">
    <subcellularLocation>
        <location evidence="5">Nucleus</location>
    </subcellularLocation>
</comment>
<comment type="alternative products">
    <event type="alternative splicing"/>
    <isoform>
        <id>Q8C7R7-1</id>
        <name>1</name>
        <sequence type="displayed"/>
    </isoform>
    <isoform>
        <id>Q8C7R7-2</id>
        <name>2</name>
        <sequence type="described" ref="VSP_030122 VSP_030123"/>
    </isoform>
    <isoform>
        <id>Q8C7R7-3</id>
        <name>3</name>
        <sequence type="described" ref="VSP_030121"/>
    </isoform>
</comment>
<comment type="tissue specificity">
    <text evidence="4 5">In the adult pancreas, expression is restricted to the islets where it could be detected in all endocrine lineages.</text>
</comment>
<comment type="developmental stage">
    <text evidence="4 5">Expressed initially broadly in the definitive endoderm after gastrulation, becomes restricted to the gut and pancreatic bud at mid gestation, and is reactivated by Neurog3 in islet progenitor cells and is ultimately restricted to pancreatic islets in the mature pancreas (at protein level).</text>
</comment>
<comment type="induction">
    <text evidence="4">By Neurog3.</text>
</comment>
<comment type="disruption phenotype">
    <text evidence="5">Mice were born at the expected Mendelian ratio, but fail to feed normally, exhibit gross bowel distension due to small bowel obstruction and die within 2 days post partum. Some, but not all, of the animals also have reduced pancreas size. pancreata had almost no expression of the islet hormones genes, except for PP (polypeptide-producing).</text>
</comment>
<comment type="similarity">
    <text evidence="2">Belongs to the RFX family.</text>
</comment>
<comment type="sequence caution" evidence="7">
    <conflict type="erroneous initiation">
        <sequence resource="EMBL-CDS" id="AAI32105"/>
    </conflict>
</comment>
<comment type="sequence caution" evidence="7">
    <conflict type="erroneous initiation">
        <sequence resource="EMBL-CDS" id="AAI32295"/>
    </conflict>
</comment>
<evidence type="ECO:0000250" key="1">
    <source>
        <dbReference type="UniProtKB" id="Q8HWS3"/>
    </source>
</evidence>
<evidence type="ECO:0000255" key="2">
    <source>
        <dbReference type="PROSITE-ProRule" id="PRU00858"/>
    </source>
</evidence>
<evidence type="ECO:0000256" key="3">
    <source>
        <dbReference type="SAM" id="MobiDB-lite"/>
    </source>
</evidence>
<evidence type="ECO:0000269" key="4">
    <source>
    </source>
</evidence>
<evidence type="ECO:0000269" key="5">
    <source>
    </source>
</evidence>
<evidence type="ECO:0000303" key="6">
    <source>
    </source>
</evidence>
<evidence type="ECO:0000305" key="7"/>
<feature type="chain" id="PRO_0000313722" description="DNA-binding protein RFX6">
    <location>
        <begin position="1"/>
        <end position="927"/>
    </location>
</feature>
<feature type="DNA-binding region" description="RFX-type winged-helix" evidence="2">
    <location>
        <begin position="123"/>
        <end position="198"/>
    </location>
</feature>
<feature type="region of interest" description="Disordered" evidence="3">
    <location>
        <begin position="1"/>
        <end position="21"/>
    </location>
</feature>
<feature type="region of interest" description="Disordered" evidence="3">
    <location>
        <begin position="81"/>
        <end position="108"/>
    </location>
</feature>
<feature type="splice variant" id="VSP_030121" description="In isoform 3." evidence="6">
    <location>
        <begin position="1"/>
        <end position="264"/>
    </location>
</feature>
<feature type="splice variant" id="VSP_030122" description="In isoform 2." evidence="6">
    <original>SFHLIR</original>
    <variation>IQCVLQ</variation>
    <location>
        <begin position="519"/>
        <end position="524"/>
    </location>
</feature>
<feature type="splice variant" id="VSP_030123" description="In isoform 2." evidence="6">
    <location>
        <begin position="525"/>
        <end position="927"/>
    </location>
</feature>
<organism>
    <name type="scientific">Mus musculus</name>
    <name type="common">Mouse</name>
    <dbReference type="NCBI Taxonomy" id="10090"/>
    <lineage>
        <taxon>Eukaryota</taxon>
        <taxon>Metazoa</taxon>
        <taxon>Chordata</taxon>
        <taxon>Craniata</taxon>
        <taxon>Vertebrata</taxon>
        <taxon>Euteleostomi</taxon>
        <taxon>Mammalia</taxon>
        <taxon>Eutheria</taxon>
        <taxon>Euarchontoglires</taxon>
        <taxon>Glires</taxon>
        <taxon>Rodentia</taxon>
        <taxon>Myomorpha</taxon>
        <taxon>Muroidea</taxon>
        <taxon>Muridae</taxon>
        <taxon>Murinae</taxon>
        <taxon>Mus</taxon>
        <taxon>Mus</taxon>
    </lineage>
</organism>
<sequence length="927" mass="102566">MAKVRELEEAFVQEQPSPQLPSEIAEECCAQLLGKGLLVYPEDSAYLLAETAAGARSSGEKGGDPGLQVGVKSEMQLNNGNFSSEEEDADTQESKTKAADPQLSQKKSITQMMKDKKKQTQLTLQWLEDNYIVCEGVCLPRCILYAHYLDFCRKEKLEPACAATFGKTIRQKFPLLTTRRLGTRGHSKYHYYGIGIKESSAYYHSVYSGKGLTRFSGSKLKNEGGFTRKYSLSSKTGTLLPEFPSAQHLVYQGCISKDKVDTLIMMYKTHCQCILDNAINGNFEEIQHFLLHFWQGMPDHLLPLLENPVIIDIFCVCDSILYKVLTDVLIPATMQEMPESLLADIRNFAKNWEQWVVSSLENLPEALIDKKIPILRRFVSSLKRQTSFLHLAQIARPALFDQHVVNAMVSDIEKVDLNSIGSQALLTISNSTDTESDIYSEHDSITVFQELKDLLKKNATVEAFIEWLDTVVEQRVIKMSKQNGRSLKKRAQDFLLKWSFFGARVMHNLTLNNASSFGSFHLIRMLLDEYILLAMETQFNNDKEQELQNLLDKYMKNSDASKAAFTASPSSCFLANRNKASSLASDTVKNESHVETSYVPLPSSQPGAIPPALHPFSTEDTDNMPLPGQIELSQSTGHLMTPPISPAIASRGSVINQGPMASRPPSVGTVLSAPTHCSTYAEPIYPTLSPANHDFYGTNSNYQTMFRTQSHPASSLYAHRAEHGRCMAWTEQQLSRDFFGGSCAGSPYNCRPPSSYGPSTHTQESHSMQVLNTGSFNFLSNAGAGSCQGSTLPSNSPNGYYGNNINYSEAHRLGSMVNQHVSVISSVRSLPPYSDIHDPLNILDDSSRKQNNSFYADTLSPVACRTTVVASNLQTQIPSSSSQCMYGTSNQYPVQDSLDSNAASNREMVSSLPPINTVFMGTAAGDT</sequence>
<accession>Q8C7R7</accession>
<accession>Q8CDN5</accession>
<protein>
    <recommendedName>
        <fullName>DNA-binding protein RFX6</fullName>
    </recommendedName>
    <alternativeName>
        <fullName>Regulatory factor X 6</fullName>
    </alternativeName>
    <alternativeName>
        <fullName>Regulatory factor X domain-containing protein 1</fullName>
    </alternativeName>
</protein>
<name>RFX6_MOUSE</name>
<dbReference type="EMBL" id="AK029809">
    <property type="protein sequence ID" value="BAC26627.1"/>
    <property type="molecule type" value="mRNA"/>
</dbReference>
<dbReference type="EMBL" id="AK049380">
    <property type="protein sequence ID" value="BAC33722.1"/>
    <property type="molecule type" value="mRNA"/>
</dbReference>
<dbReference type="EMBL" id="AC153527">
    <property type="status" value="NOT_ANNOTATED_CDS"/>
    <property type="molecule type" value="Genomic_DNA"/>
</dbReference>
<dbReference type="EMBL" id="BC132104">
    <property type="protein sequence ID" value="AAI32105.1"/>
    <property type="status" value="ALT_INIT"/>
    <property type="molecule type" value="mRNA"/>
</dbReference>
<dbReference type="EMBL" id="BC132294">
    <property type="protein sequence ID" value="AAI32295.1"/>
    <property type="status" value="ALT_INIT"/>
    <property type="molecule type" value="mRNA"/>
</dbReference>
<dbReference type="CCDS" id="CCDS23835.1">
    <molecule id="Q8C7R7-3"/>
</dbReference>
<dbReference type="CCDS" id="CCDS48558.1">
    <molecule id="Q8C7R7-1"/>
</dbReference>
<dbReference type="RefSeq" id="NP_001152861.1">
    <molecule id="Q8C7R7-1"/>
    <property type="nucleotide sequence ID" value="NM_001159389.1"/>
</dbReference>
<dbReference type="RefSeq" id="NP_796280.1">
    <molecule id="Q8C7R7-3"/>
    <property type="nucleotide sequence ID" value="NM_177306.3"/>
</dbReference>
<dbReference type="SMR" id="Q8C7R7"/>
<dbReference type="BioGRID" id="236448">
    <property type="interactions" value="1"/>
</dbReference>
<dbReference type="FunCoup" id="Q8C7R7">
    <property type="interactions" value="1283"/>
</dbReference>
<dbReference type="STRING" id="10090.ENSMUSP00000116057"/>
<dbReference type="iPTMnet" id="Q8C7R7"/>
<dbReference type="PhosphoSitePlus" id="Q8C7R7"/>
<dbReference type="PaxDb" id="10090-ENSMUSP00000116057"/>
<dbReference type="Antibodypedia" id="32535">
    <property type="antibodies" value="76 antibodies from 19 providers"/>
</dbReference>
<dbReference type="DNASU" id="320995"/>
<dbReference type="Ensembl" id="ENSMUST00000050455.5">
    <molecule id="Q8C7R7-3"/>
    <property type="protein sequence ID" value="ENSMUSP00000057384.5"/>
    <property type="gene ID" value="ENSMUSG00000019900.20"/>
</dbReference>
<dbReference type="Ensembl" id="ENSMUST00000122922.10">
    <molecule id="Q8C7R7-1"/>
    <property type="protein sequence ID" value="ENSMUSP00000116057.2"/>
    <property type="gene ID" value="ENSMUSG00000019900.20"/>
</dbReference>
<dbReference type="GeneID" id="320995"/>
<dbReference type="KEGG" id="mmu:320995"/>
<dbReference type="UCSC" id="uc007fax.2">
    <molecule id="Q8C7R7-2"/>
    <property type="organism name" value="mouse"/>
</dbReference>
<dbReference type="UCSC" id="uc007fay.1">
    <molecule id="Q8C7R7-1"/>
    <property type="organism name" value="mouse"/>
</dbReference>
<dbReference type="UCSC" id="uc011xdt.1">
    <molecule id="Q8C7R7-3"/>
    <property type="organism name" value="mouse"/>
</dbReference>
<dbReference type="AGR" id="MGI:2445208"/>
<dbReference type="CTD" id="222546"/>
<dbReference type="MGI" id="MGI:2445208">
    <property type="gene designation" value="Rfx6"/>
</dbReference>
<dbReference type="VEuPathDB" id="HostDB:ENSMUSG00000019900"/>
<dbReference type="eggNOG" id="KOG3712">
    <property type="taxonomic scope" value="Eukaryota"/>
</dbReference>
<dbReference type="GeneTree" id="ENSGT01050000244879"/>
<dbReference type="HOGENOM" id="CLU_013981_0_0_1"/>
<dbReference type="InParanoid" id="Q8C7R7"/>
<dbReference type="OMA" id="FAKNWEH"/>
<dbReference type="OrthoDB" id="10056949at2759"/>
<dbReference type="PhylomeDB" id="Q8C7R7"/>
<dbReference type="TreeFam" id="TF321340"/>
<dbReference type="BioGRID-ORCS" id="320995">
    <property type="hits" value="1 hit in 78 CRISPR screens"/>
</dbReference>
<dbReference type="PRO" id="PR:Q8C7R7"/>
<dbReference type="Proteomes" id="UP000000589">
    <property type="component" value="Chromosome 10"/>
</dbReference>
<dbReference type="RNAct" id="Q8C7R7">
    <property type="molecule type" value="protein"/>
</dbReference>
<dbReference type="Bgee" id="ENSMUSG00000019900">
    <property type="expression patterns" value="Expressed in islet of Langerhans and 33 other cell types or tissues"/>
</dbReference>
<dbReference type="ExpressionAtlas" id="Q8C7R7">
    <property type="expression patterns" value="baseline and differential"/>
</dbReference>
<dbReference type="GO" id="GO:0005634">
    <property type="term" value="C:nucleus"/>
    <property type="evidence" value="ECO:0000314"/>
    <property type="project" value="UniProtKB"/>
</dbReference>
<dbReference type="GO" id="GO:0001228">
    <property type="term" value="F:DNA-binding transcription activator activity, RNA polymerase II-specific"/>
    <property type="evidence" value="ECO:0007669"/>
    <property type="project" value="Ensembl"/>
</dbReference>
<dbReference type="GO" id="GO:0000977">
    <property type="term" value="F:RNA polymerase II transcription regulatory region sequence-specific DNA binding"/>
    <property type="evidence" value="ECO:0007669"/>
    <property type="project" value="Ensembl"/>
</dbReference>
<dbReference type="GO" id="GO:0000976">
    <property type="term" value="F:transcription cis-regulatory region binding"/>
    <property type="evidence" value="ECO:0000250"/>
    <property type="project" value="UniProtKB"/>
</dbReference>
<dbReference type="GO" id="GO:0042593">
    <property type="term" value="P:glucose homeostasis"/>
    <property type="evidence" value="ECO:0000315"/>
    <property type="project" value="UniProtKB"/>
</dbReference>
<dbReference type="GO" id="GO:0003310">
    <property type="term" value="P:pancreatic A cell differentiation"/>
    <property type="evidence" value="ECO:0000315"/>
    <property type="project" value="UniProtKB"/>
</dbReference>
<dbReference type="GO" id="GO:0003311">
    <property type="term" value="P:pancreatic D cell differentiation"/>
    <property type="evidence" value="ECO:0000315"/>
    <property type="project" value="UniProtKB"/>
</dbReference>
<dbReference type="GO" id="GO:0090104">
    <property type="term" value="P:pancreatic epsilon cell differentiation"/>
    <property type="evidence" value="ECO:0000315"/>
    <property type="project" value="UniProtKB"/>
</dbReference>
<dbReference type="GO" id="GO:0045893">
    <property type="term" value="P:positive regulation of DNA-templated transcription"/>
    <property type="evidence" value="ECO:0000250"/>
    <property type="project" value="UniProtKB"/>
</dbReference>
<dbReference type="GO" id="GO:0035774">
    <property type="term" value="P:positive regulation of insulin secretion involved in cellular response to glucose stimulus"/>
    <property type="evidence" value="ECO:0000250"/>
    <property type="project" value="UniProtKB"/>
</dbReference>
<dbReference type="GO" id="GO:0045944">
    <property type="term" value="P:positive regulation of transcription by RNA polymerase II"/>
    <property type="evidence" value="ECO:0000250"/>
    <property type="project" value="UniProtKB"/>
</dbReference>
<dbReference type="GO" id="GO:0050796">
    <property type="term" value="P:regulation of insulin secretion"/>
    <property type="evidence" value="ECO:0000315"/>
    <property type="project" value="UniProtKB"/>
</dbReference>
<dbReference type="GO" id="GO:0003309">
    <property type="term" value="P:type B pancreatic cell differentiation"/>
    <property type="evidence" value="ECO:0000315"/>
    <property type="project" value="UniProtKB"/>
</dbReference>
<dbReference type="FunFam" id="1.10.10.10:FF:000211">
    <property type="entry name" value="Regulatory factor X, 6"/>
    <property type="match status" value="1"/>
</dbReference>
<dbReference type="Gene3D" id="1.10.10.10">
    <property type="entry name" value="Winged helix-like DNA-binding domain superfamily/Winged helix DNA-binding domain"/>
    <property type="match status" value="1"/>
</dbReference>
<dbReference type="InterPro" id="IPR003150">
    <property type="entry name" value="DNA-bd_RFX"/>
</dbReference>
<dbReference type="InterPro" id="IPR039779">
    <property type="entry name" value="RFX-like"/>
</dbReference>
<dbReference type="InterPro" id="IPR036388">
    <property type="entry name" value="WH-like_DNA-bd_sf"/>
</dbReference>
<dbReference type="InterPro" id="IPR036390">
    <property type="entry name" value="WH_DNA-bd_sf"/>
</dbReference>
<dbReference type="PANTHER" id="PTHR12619:SF28">
    <property type="entry name" value="DNA-BINDING PROTEIN RFX6"/>
    <property type="match status" value="1"/>
</dbReference>
<dbReference type="PANTHER" id="PTHR12619">
    <property type="entry name" value="RFX TRANSCRIPTION FACTOR FAMILY"/>
    <property type="match status" value="1"/>
</dbReference>
<dbReference type="Pfam" id="PF25340">
    <property type="entry name" value="BCD_RFX"/>
    <property type="match status" value="1"/>
</dbReference>
<dbReference type="Pfam" id="PF02257">
    <property type="entry name" value="RFX_DNA_binding"/>
    <property type="match status" value="1"/>
</dbReference>
<dbReference type="SUPFAM" id="SSF46785">
    <property type="entry name" value="Winged helix' DNA-binding domain"/>
    <property type="match status" value="1"/>
</dbReference>
<dbReference type="PROSITE" id="PS51526">
    <property type="entry name" value="RFX_DBD"/>
    <property type="match status" value="1"/>
</dbReference>
<gene>
    <name type="primary">Rfx6</name>
    <name type="synonym">Rfxdc1</name>
</gene>
<reference key="1">
    <citation type="journal article" date="2005" name="Science">
        <title>The transcriptional landscape of the mammalian genome.</title>
        <authorList>
            <person name="Carninci P."/>
            <person name="Kasukawa T."/>
            <person name="Katayama S."/>
            <person name="Gough J."/>
            <person name="Frith M.C."/>
            <person name="Maeda N."/>
            <person name="Oyama R."/>
            <person name="Ravasi T."/>
            <person name="Lenhard B."/>
            <person name="Wells C."/>
            <person name="Kodzius R."/>
            <person name="Shimokawa K."/>
            <person name="Bajic V.B."/>
            <person name="Brenner S.E."/>
            <person name="Batalov S."/>
            <person name="Forrest A.R."/>
            <person name="Zavolan M."/>
            <person name="Davis M.J."/>
            <person name="Wilming L.G."/>
            <person name="Aidinis V."/>
            <person name="Allen J.E."/>
            <person name="Ambesi-Impiombato A."/>
            <person name="Apweiler R."/>
            <person name="Aturaliya R.N."/>
            <person name="Bailey T.L."/>
            <person name="Bansal M."/>
            <person name="Baxter L."/>
            <person name="Beisel K.W."/>
            <person name="Bersano T."/>
            <person name="Bono H."/>
            <person name="Chalk A.M."/>
            <person name="Chiu K.P."/>
            <person name="Choudhary V."/>
            <person name="Christoffels A."/>
            <person name="Clutterbuck D.R."/>
            <person name="Crowe M.L."/>
            <person name="Dalla E."/>
            <person name="Dalrymple B.P."/>
            <person name="de Bono B."/>
            <person name="Della Gatta G."/>
            <person name="di Bernardo D."/>
            <person name="Down T."/>
            <person name="Engstrom P."/>
            <person name="Fagiolini M."/>
            <person name="Faulkner G."/>
            <person name="Fletcher C.F."/>
            <person name="Fukushima T."/>
            <person name="Furuno M."/>
            <person name="Futaki S."/>
            <person name="Gariboldi M."/>
            <person name="Georgii-Hemming P."/>
            <person name="Gingeras T.R."/>
            <person name="Gojobori T."/>
            <person name="Green R.E."/>
            <person name="Gustincich S."/>
            <person name="Harbers M."/>
            <person name="Hayashi Y."/>
            <person name="Hensch T.K."/>
            <person name="Hirokawa N."/>
            <person name="Hill D."/>
            <person name="Huminiecki L."/>
            <person name="Iacono M."/>
            <person name="Ikeo K."/>
            <person name="Iwama A."/>
            <person name="Ishikawa T."/>
            <person name="Jakt M."/>
            <person name="Kanapin A."/>
            <person name="Katoh M."/>
            <person name="Kawasawa Y."/>
            <person name="Kelso J."/>
            <person name="Kitamura H."/>
            <person name="Kitano H."/>
            <person name="Kollias G."/>
            <person name="Krishnan S.P."/>
            <person name="Kruger A."/>
            <person name="Kummerfeld S.K."/>
            <person name="Kurochkin I.V."/>
            <person name="Lareau L.F."/>
            <person name="Lazarevic D."/>
            <person name="Lipovich L."/>
            <person name="Liu J."/>
            <person name="Liuni S."/>
            <person name="McWilliam S."/>
            <person name="Madan Babu M."/>
            <person name="Madera M."/>
            <person name="Marchionni L."/>
            <person name="Matsuda H."/>
            <person name="Matsuzawa S."/>
            <person name="Miki H."/>
            <person name="Mignone F."/>
            <person name="Miyake S."/>
            <person name="Morris K."/>
            <person name="Mottagui-Tabar S."/>
            <person name="Mulder N."/>
            <person name="Nakano N."/>
            <person name="Nakauchi H."/>
            <person name="Ng P."/>
            <person name="Nilsson R."/>
            <person name="Nishiguchi S."/>
            <person name="Nishikawa S."/>
            <person name="Nori F."/>
            <person name="Ohara O."/>
            <person name="Okazaki Y."/>
            <person name="Orlando V."/>
            <person name="Pang K.C."/>
            <person name="Pavan W.J."/>
            <person name="Pavesi G."/>
            <person name="Pesole G."/>
            <person name="Petrovsky N."/>
            <person name="Piazza S."/>
            <person name="Reed J."/>
            <person name="Reid J.F."/>
            <person name="Ring B.Z."/>
            <person name="Ringwald M."/>
            <person name="Rost B."/>
            <person name="Ruan Y."/>
            <person name="Salzberg S.L."/>
            <person name="Sandelin A."/>
            <person name="Schneider C."/>
            <person name="Schoenbach C."/>
            <person name="Sekiguchi K."/>
            <person name="Semple C.A."/>
            <person name="Seno S."/>
            <person name="Sessa L."/>
            <person name="Sheng Y."/>
            <person name="Shibata Y."/>
            <person name="Shimada H."/>
            <person name="Shimada K."/>
            <person name="Silva D."/>
            <person name="Sinclair B."/>
            <person name="Sperling S."/>
            <person name="Stupka E."/>
            <person name="Sugiura K."/>
            <person name="Sultana R."/>
            <person name="Takenaka Y."/>
            <person name="Taki K."/>
            <person name="Tammoja K."/>
            <person name="Tan S.L."/>
            <person name="Tang S."/>
            <person name="Taylor M.S."/>
            <person name="Tegner J."/>
            <person name="Teichmann S.A."/>
            <person name="Ueda H.R."/>
            <person name="van Nimwegen E."/>
            <person name="Verardo R."/>
            <person name="Wei C.L."/>
            <person name="Yagi K."/>
            <person name="Yamanishi H."/>
            <person name="Zabarovsky E."/>
            <person name="Zhu S."/>
            <person name="Zimmer A."/>
            <person name="Hide W."/>
            <person name="Bult C."/>
            <person name="Grimmond S.M."/>
            <person name="Teasdale R.D."/>
            <person name="Liu E.T."/>
            <person name="Brusic V."/>
            <person name="Quackenbush J."/>
            <person name="Wahlestedt C."/>
            <person name="Mattick J.S."/>
            <person name="Hume D.A."/>
            <person name="Kai C."/>
            <person name="Sasaki D."/>
            <person name="Tomaru Y."/>
            <person name="Fukuda S."/>
            <person name="Kanamori-Katayama M."/>
            <person name="Suzuki M."/>
            <person name="Aoki J."/>
            <person name="Arakawa T."/>
            <person name="Iida J."/>
            <person name="Imamura K."/>
            <person name="Itoh M."/>
            <person name="Kato T."/>
            <person name="Kawaji H."/>
            <person name="Kawagashira N."/>
            <person name="Kawashima T."/>
            <person name="Kojima M."/>
            <person name="Kondo S."/>
            <person name="Konno H."/>
            <person name="Nakano K."/>
            <person name="Ninomiya N."/>
            <person name="Nishio T."/>
            <person name="Okada M."/>
            <person name="Plessy C."/>
            <person name="Shibata K."/>
            <person name="Shiraki T."/>
            <person name="Suzuki S."/>
            <person name="Tagami M."/>
            <person name="Waki K."/>
            <person name="Watahiki A."/>
            <person name="Okamura-Oho Y."/>
            <person name="Suzuki H."/>
            <person name="Kawai J."/>
            <person name="Hayashizaki Y."/>
        </authorList>
    </citation>
    <scope>NUCLEOTIDE SEQUENCE [LARGE SCALE MRNA] (ISOFORMS 2 AND 3)</scope>
    <source>
        <strain>C57BL/6J</strain>
        <tissue>Testis</tissue>
    </source>
</reference>
<reference key="2">
    <citation type="journal article" date="2009" name="PLoS Biol.">
        <title>Lineage-specific biology revealed by a finished genome assembly of the mouse.</title>
        <authorList>
            <person name="Church D.M."/>
            <person name="Goodstadt L."/>
            <person name="Hillier L.W."/>
            <person name="Zody M.C."/>
            <person name="Goldstein S."/>
            <person name="She X."/>
            <person name="Bult C.J."/>
            <person name="Agarwala R."/>
            <person name="Cherry J.L."/>
            <person name="DiCuccio M."/>
            <person name="Hlavina W."/>
            <person name="Kapustin Y."/>
            <person name="Meric P."/>
            <person name="Maglott D."/>
            <person name="Birtle Z."/>
            <person name="Marques A.C."/>
            <person name="Graves T."/>
            <person name="Zhou S."/>
            <person name="Teague B."/>
            <person name="Potamousis K."/>
            <person name="Churas C."/>
            <person name="Place M."/>
            <person name="Herschleb J."/>
            <person name="Runnheim R."/>
            <person name="Forrest D."/>
            <person name="Amos-Landgraf J."/>
            <person name="Schwartz D.C."/>
            <person name="Cheng Z."/>
            <person name="Lindblad-Toh K."/>
            <person name="Eichler E.E."/>
            <person name="Ponting C.P."/>
        </authorList>
    </citation>
    <scope>NUCLEOTIDE SEQUENCE [LARGE SCALE GENOMIC DNA]</scope>
    <source>
        <strain>C57BL/6J</strain>
    </source>
</reference>
<reference key="3">
    <citation type="journal article" date="2004" name="Genome Res.">
        <title>The status, quality, and expansion of the NIH full-length cDNA project: the Mammalian Gene Collection (MGC).</title>
        <authorList>
            <consortium name="The MGC Project Team"/>
        </authorList>
    </citation>
    <scope>NUCLEOTIDE SEQUENCE [LARGE SCALE MRNA] OF 213-927 (ISOFORM 1)</scope>
    <source>
        <tissue>Brain</tissue>
    </source>
</reference>
<reference key="4">
    <citation type="journal article" date="2010" name="Development">
        <title>Rfx6 is an Ngn3-dependent winged helix transcription factor required for pancreatic islet cell development.</title>
        <authorList>
            <person name="Soyer J."/>
            <person name="Flasse L."/>
            <person name="Raffelsberger W."/>
            <person name="Beucher A."/>
            <person name="Orvain C."/>
            <person name="Peers B."/>
            <person name="Ravassard P."/>
            <person name="Vermot J."/>
            <person name="Voz M.L."/>
            <person name="Mellitzer G."/>
            <person name="Gradwohl G."/>
        </authorList>
    </citation>
    <scope>TISSUE SPECIFICITY</scope>
    <scope>DEVELOPMENTAL STAGE</scope>
    <scope>INDUCTION</scope>
</reference>
<reference key="5">
    <citation type="journal article" date="2010" name="Nature">
        <title>Rfx6 directs islet formation and insulin production in mice and humans.</title>
        <authorList>
            <person name="Smith S.B."/>
            <person name="Qu H.Q."/>
            <person name="Taleb N."/>
            <person name="Kishimoto N.Y."/>
            <person name="Scheel D.W."/>
            <person name="Lu Y."/>
            <person name="Patch A.M."/>
            <person name="Grabs R."/>
            <person name="Wang J."/>
            <person name="Lynn F.C."/>
            <person name="Miyatsuka T."/>
            <person name="Mitchell J."/>
            <person name="Seerke R."/>
            <person name="Desir J."/>
            <person name="Eijnden S.V."/>
            <person name="Abramowicz M."/>
            <person name="Kacet N."/>
            <person name="Weill J."/>
            <person name="Renard M.E."/>
            <person name="Gentile M."/>
            <person name="Hansen I."/>
            <person name="Dewar K."/>
            <person name="Hattersley A.T."/>
            <person name="Wang R."/>
            <person name="Wilson M.E."/>
            <person name="Johnson J.D."/>
            <person name="Polychronakos C."/>
            <person name="German M.S."/>
        </authorList>
    </citation>
    <scope>FUNCTION</scope>
    <scope>SUBCELLULAR LOCATION</scope>
    <scope>TISSUE SPECIFICITY</scope>
    <scope>DEVELOPMENTAL STAGE</scope>
    <scope>DISRUPTION PHENOTYPE</scope>
    <scope>INTERACTION WITH RFX3</scope>
</reference>
<keyword id="KW-0025">Alternative splicing</keyword>
<keyword id="KW-0217">Developmental protein</keyword>
<keyword id="KW-0219">Diabetes mellitus</keyword>
<keyword id="KW-0221">Differentiation</keyword>
<keyword id="KW-0238">DNA-binding</keyword>
<keyword id="KW-0539">Nucleus</keyword>
<keyword id="KW-1185">Reference proteome</keyword>
<keyword id="KW-0804">Transcription</keyword>
<keyword id="KW-0805">Transcription regulation</keyword>